<accession>Q9NS66</accession>
<accession>B1B0A5</accession>
<gene>
    <name type="primary">GPR173</name>
    <name type="synonym">SREB3</name>
</gene>
<proteinExistence type="evidence at protein level"/>
<name>GP173_HUMAN</name>
<evidence type="ECO:0000250" key="1">
    <source>
        <dbReference type="UniProtKB" id="Q9JJH2"/>
    </source>
</evidence>
<evidence type="ECO:0000255" key="2"/>
<evidence type="ECO:0000255" key="3">
    <source>
        <dbReference type="PROSITE-ProRule" id="PRU00521"/>
    </source>
</evidence>
<evidence type="ECO:0000269" key="4">
    <source>
    </source>
</evidence>
<evidence type="ECO:0000305" key="5"/>
<keyword id="KW-1003">Cell membrane</keyword>
<keyword id="KW-1015">Disulfide bond</keyword>
<keyword id="KW-0297">G-protein coupled receptor</keyword>
<keyword id="KW-0325">Glycoprotein</keyword>
<keyword id="KW-0472">Membrane</keyword>
<keyword id="KW-0675">Receptor</keyword>
<keyword id="KW-1185">Reference proteome</keyword>
<keyword id="KW-0807">Transducer</keyword>
<keyword id="KW-0812">Transmembrane</keyword>
<keyword id="KW-1133">Transmembrane helix</keyword>
<dbReference type="EMBL" id="AB040801">
    <property type="protein sequence ID" value="BAA96647.1"/>
    <property type="molecule type" value="mRNA"/>
</dbReference>
<dbReference type="EMBL" id="BX322635">
    <property type="status" value="NOT_ANNOTATED_CDS"/>
    <property type="molecule type" value="Genomic_DNA"/>
</dbReference>
<dbReference type="EMBL" id="CH471154">
    <property type="protein sequence ID" value="EAW93142.1"/>
    <property type="molecule type" value="Genomic_DNA"/>
</dbReference>
<dbReference type="EMBL" id="BC009861">
    <property type="protein sequence ID" value="AAH09861.1"/>
    <property type="molecule type" value="mRNA"/>
</dbReference>
<dbReference type="CCDS" id="CCDS14349.1"/>
<dbReference type="PIR" id="JC7289">
    <property type="entry name" value="JC7289"/>
</dbReference>
<dbReference type="RefSeq" id="NP_061842.1">
    <property type="nucleotide sequence ID" value="NM_018969.6"/>
</dbReference>
<dbReference type="RefSeq" id="XP_011529100.1">
    <property type="nucleotide sequence ID" value="XM_011530798.2"/>
</dbReference>
<dbReference type="RefSeq" id="XP_047298140.1">
    <property type="nucleotide sequence ID" value="XM_047442184.1"/>
</dbReference>
<dbReference type="RefSeq" id="XP_054183230.1">
    <property type="nucleotide sequence ID" value="XM_054327255.1"/>
</dbReference>
<dbReference type="SMR" id="Q9NS66"/>
<dbReference type="BioGRID" id="119931">
    <property type="interactions" value="57"/>
</dbReference>
<dbReference type="FunCoup" id="Q9NS66">
    <property type="interactions" value="870"/>
</dbReference>
<dbReference type="IntAct" id="Q9NS66">
    <property type="interactions" value="49"/>
</dbReference>
<dbReference type="STRING" id="9606.ENSP00000331600"/>
<dbReference type="ChEMBL" id="CHEMBL4523922"/>
<dbReference type="GlyCosmos" id="Q9NS66">
    <property type="glycosylation" value="2 sites, No reported glycans"/>
</dbReference>
<dbReference type="GlyGen" id="Q9NS66">
    <property type="glycosylation" value="2 sites"/>
</dbReference>
<dbReference type="iPTMnet" id="Q9NS66"/>
<dbReference type="PhosphoSitePlus" id="Q9NS66"/>
<dbReference type="BioMuta" id="GPR173"/>
<dbReference type="DMDM" id="15214315"/>
<dbReference type="PaxDb" id="9606-ENSP00000331600"/>
<dbReference type="ProteomicsDB" id="82496"/>
<dbReference type="Antibodypedia" id="589">
    <property type="antibodies" value="215 antibodies from 26 providers"/>
</dbReference>
<dbReference type="DNASU" id="54328"/>
<dbReference type="Ensembl" id="ENST00000332582.5">
    <property type="protein sequence ID" value="ENSP00000331600.5"/>
    <property type="gene ID" value="ENSG00000184194.6"/>
</dbReference>
<dbReference type="GeneID" id="54328"/>
<dbReference type="KEGG" id="hsa:54328"/>
<dbReference type="MANE-Select" id="ENST00000332582.5">
    <property type="protein sequence ID" value="ENSP00000331600.5"/>
    <property type="RefSeq nucleotide sequence ID" value="NM_018969.6"/>
    <property type="RefSeq protein sequence ID" value="NP_061842.1"/>
</dbReference>
<dbReference type="UCSC" id="uc004dru.4">
    <property type="organism name" value="human"/>
</dbReference>
<dbReference type="AGR" id="HGNC:18186"/>
<dbReference type="CTD" id="54328"/>
<dbReference type="DisGeNET" id="54328"/>
<dbReference type="GeneCards" id="GPR173"/>
<dbReference type="HGNC" id="HGNC:18186">
    <property type="gene designation" value="GPR173"/>
</dbReference>
<dbReference type="HPA" id="ENSG00000184194">
    <property type="expression patterns" value="Tissue enhanced (brain, pituitary gland)"/>
</dbReference>
<dbReference type="MIM" id="300253">
    <property type="type" value="gene"/>
</dbReference>
<dbReference type="neXtProt" id="NX_Q9NS66"/>
<dbReference type="OpenTargets" id="ENSG00000184194"/>
<dbReference type="PharmGKB" id="PA134896710"/>
<dbReference type="VEuPathDB" id="HostDB:ENSG00000184194"/>
<dbReference type="eggNOG" id="KOG3656">
    <property type="taxonomic scope" value="Eukaryota"/>
</dbReference>
<dbReference type="GeneTree" id="ENSGT00890000139436"/>
<dbReference type="HOGENOM" id="CLU_055518_0_0_1"/>
<dbReference type="InParanoid" id="Q9NS66"/>
<dbReference type="OMA" id="KCLRTHT"/>
<dbReference type="PAN-GO" id="Q9NS66">
    <property type="GO annotations" value="2 GO annotations based on evolutionary models"/>
</dbReference>
<dbReference type="PhylomeDB" id="Q9NS66"/>
<dbReference type="TreeFam" id="TF331163"/>
<dbReference type="PathwayCommons" id="Q9NS66"/>
<dbReference type="SignaLink" id="Q9NS66"/>
<dbReference type="BioGRID-ORCS" id="54328">
    <property type="hits" value="12 hits in 760 CRISPR screens"/>
</dbReference>
<dbReference type="ChiTaRS" id="GPR173">
    <property type="organism name" value="human"/>
</dbReference>
<dbReference type="GeneWiki" id="GPR173"/>
<dbReference type="GenomeRNAi" id="54328"/>
<dbReference type="Pharos" id="Q9NS66">
    <property type="development level" value="Tbio"/>
</dbReference>
<dbReference type="PRO" id="PR:Q9NS66"/>
<dbReference type="Proteomes" id="UP000005640">
    <property type="component" value="Chromosome X"/>
</dbReference>
<dbReference type="RNAct" id="Q9NS66">
    <property type="molecule type" value="protein"/>
</dbReference>
<dbReference type="Bgee" id="ENSG00000184194">
    <property type="expression patterns" value="Expressed in cortical plate and 106 other cell types or tissues"/>
</dbReference>
<dbReference type="ExpressionAtlas" id="Q9NS66">
    <property type="expression patterns" value="baseline and differential"/>
</dbReference>
<dbReference type="GO" id="GO:0005886">
    <property type="term" value="C:plasma membrane"/>
    <property type="evidence" value="ECO:0000318"/>
    <property type="project" value="GO_Central"/>
</dbReference>
<dbReference type="GO" id="GO:0004930">
    <property type="term" value="F:G protein-coupled receptor activity"/>
    <property type="evidence" value="ECO:0000304"/>
    <property type="project" value="ProtInc"/>
</dbReference>
<dbReference type="GO" id="GO:0004968">
    <property type="term" value="F:gonadotropin-releasing hormone receptor activity"/>
    <property type="evidence" value="ECO:0000318"/>
    <property type="project" value="GO_Central"/>
</dbReference>
<dbReference type="GO" id="GO:2001223">
    <property type="term" value="P:negative regulation of neuron migration"/>
    <property type="evidence" value="ECO:0007669"/>
    <property type="project" value="Ensembl"/>
</dbReference>
<dbReference type="GO" id="GO:0007165">
    <property type="term" value="P:signal transduction"/>
    <property type="evidence" value="ECO:0000304"/>
    <property type="project" value="ProtInc"/>
</dbReference>
<dbReference type="CDD" id="cd15217">
    <property type="entry name" value="7tmA_SREB3_GPR173"/>
    <property type="match status" value="1"/>
</dbReference>
<dbReference type="FunFam" id="1.20.1070.10:FF:000074">
    <property type="entry name" value="probable G-protein coupled receptor 173"/>
    <property type="match status" value="1"/>
</dbReference>
<dbReference type="Gene3D" id="1.20.1070.10">
    <property type="entry name" value="Rhodopsin 7-helix transmembrane proteins"/>
    <property type="match status" value="1"/>
</dbReference>
<dbReference type="InterPro" id="IPR051509">
    <property type="entry name" value="GPCR_Orphan/Phoenixin"/>
</dbReference>
<dbReference type="InterPro" id="IPR000276">
    <property type="entry name" value="GPCR_Rhodpsn"/>
</dbReference>
<dbReference type="InterPro" id="IPR017452">
    <property type="entry name" value="GPCR_Rhodpsn_7TM"/>
</dbReference>
<dbReference type="PANTHER" id="PTHR19268">
    <property type="entry name" value="G PROTEIN-COUPLED RECEPTOR"/>
    <property type="match status" value="1"/>
</dbReference>
<dbReference type="PANTHER" id="PTHR19268:SF4">
    <property type="entry name" value="G-PROTEIN COUPLED RECEPTOR 173-RELATED"/>
    <property type="match status" value="1"/>
</dbReference>
<dbReference type="Pfam" id="PF00001">
    <property type="entry name" value="7tm_1"/>
    <property type="match status" value="1"/>
</dbReference>
<dbReference type="PRINTS" id="PR00237">
    <property type="entry name" value="GPCRRHODOPSN"/>
</dbReference>
<dbReference type="SUPFAM" id="SSF81321">
    <property type="entry name" value="Family A G protein-coupled receptor-like"/>
    <property type="match status" value="1"/>
</dbReference>
<dbReference type="PROSITE" id="PS50262">
    <property type="entry name" value="G_PROTEIN_RECEP_F1_2"/>
    <property type="match status" value="1"/>
</dbReference>
<comment type="function">
    <text evidence="1 4">Is a receptor for the SMIM20 derived peptides Phoenixin-14 and Phoenixin-20 (By similarity). It mediates the Phoenixin-14 and Phoenixin-20 augmentation of gonadotropin-releasing hormone (GNRH) signaling in the hypothalamus and pituitary gland (By similarity). In the ovary, it mediates the effects of Phoenixin-14 and Phoenixin-20 induced granulosa cell proliferation during follicular growth (PubMed:30933929).</text>
</comment>
<comment type="interaction">
    <interactant intactId="EBI-21815915">
        <id>Q9NS66</id>
    </interactant>
    <interactant intactId="EBI-3951758">
        <id>O95503</id>
        <label>CBX6</label>
    </interactant>
    <organismsDiffer>false</organismsDiffer>
    <experiments>2</experiments>
</comment>
<comment type="subcellular location">
    <subcellularLocation>
        <location evidence="5">Cell membrane</location>
        <topology evidence="2">Multi-pass membrane protein</topology>
    </subcellularLocation>
</comment>
<comment type="tissue specificity">
    <text evidence="4">Expressed in the ovary, specifically in granulosa cells of follicles that have passed the primary stage and in oocytes (at protein level) (PubMed:30933929). Expressed at high levels in brain. Lower levels in small intestine. In brain regions, detected in all regions tested. Highest levels in the cerebellum and cerebral cortex.</text>
</comment>
<comment type="similarity">
    <text evidence="3">Belongs to the G-protein coupled receptor 1 family.</text>
</comment>
<reference key="1">
    <citation type="journal article" date="2000" name="Biochem. Biophys. Res. Commun.">
        <title>An evolutionarily conserved G-protein coupled receptor family, SREB, expressed in the central nervous system.</title>
        <authorList>
            <person name="Matsumoto M."/>
            <person name="Saito T."/>
            <person name="Takasaki J."/>
            <person name="Kamohara M."/>
            <person name="Sugimoto T."/>
            <person name="Kobayashi M."/>
            <person name="Tadokoro M."/>
            <person name="Matsumoto S."/>
            <person name="Ohishi T."/>
            <person name="Furuichi K."/>
        </authorList>
    </citation>
    <scope>NUCLEOTIDE SEQUENCE [MRNA]</scope>
    <source>
        <tissue>Brain</tissue>
    </source>
</reference>
<reference key="2">
    <citation type="journal article" date="2005" name="Nature">
        <title>The DNA sequence of the human X chromosome.</title>
        <authorList>
            <person name="Ross M.T."/>
            <person name="Grafham D.V."/>
            <person name="Coffey A.J."/>
            <person name="Scherer S."/>
            <person name="McLay K."/>
            <person name="Muzny D."/>
            <person name="Platzer M."/>
            <person name="Howell G.R."/>
            <person name="Burrows C."/>
            <person name="Bird C.P."/>
            <person name="Frankish A."/>
            <person name="Lovell F.L."/>
            <person name="Howe K.L."/>
            <person name="Ashurst J.L."/>
            <person name="Fulton R.S."/>
            <person name="Sudbrak R."/>
            <person name="Wen G."/>
            <person name="Jones M.C."/>
            <person name="Hurles M.E."/>
            <person name="Andrews T.D."/>
            <person name="Scott C.E."/>
            <person name="Searle S."/>
            <person name="Ramser J."/>
            <person name="Whittaker A."/>
            <person name="Deadman R."/>
            <person name="Carter N.P."/>
            <person name="Hunt S.E."/>
            <person name="Chen R."/>
            <person name="Cree A."/>
            <person name="Gunaratne P."/>
            <person name="Havlak P."/>
            <person name="Hodgson A."/>
            <person name="Metzker M.L."/>
            <person name="Richards S."/>
            <person name="Scott G."/>
            <person name="Steffen D."/>
            <person name="Sodergren E."/>
            <person name="Wheeler D.A."/>
            <person name="Worley K.C."/>
            <person name="Ainscough R."/>
            <person name="Ambrose K.D."/>
            <person name="Ansari-Lari M.A."/>
            <person name="Aradhya S."/>
            <person name="Ashwell R.I."/>
            <person name="Babbage A.K."/>
            <person name="Bagguley C.L."/>
            <person name="Ballabio A."/>
            <person name="Banerjee R."/>
            <person name="Barker G.E."/>
            <person name="Barlow K.F."/>
            <person name="Barrett I.P."/>
            <person name="Bates K.N."/>
            <person name="Beare D.M."/>
            <person name="Beasley H."/>
            <person name="Beasley O."/>
            <person name="Beck A."/>
            <person name="Bethel G."/>
            <person name="Blechschmidt K."/>
            <person name="Brady N."/>
            <person name="Bray-Allen S."/>
            <person name="Bridgeman A.M."/>
            <person name="Brown A.J."/>
            <person name="Brown M.J."/>
            <person name="Bonnin D."/>
            <person name="Bruford E.A."/>
            <person name="Buhay C."/>
            <person name="Burch P."/>
            <person name="Burford D."/>
            <person name="Burgess J."/>
            <person name="Burrill W."/>
            <person name="Burton J."/>
            <person name="Bye J.M."/>
            <person name="Carder C."/>
            <person name="Carrel L."/>
            <person name="Chako J."/>
            <person name="Chapman J.C."/>
            <person name="Chavez D."/>
            <person name="Chen E."/>
            <person name="Chen G."/>
            <person name="Chen Y."/>
            <person name="Chen Z."/>
            <person name="Chinault C."/>
            <person name="Ciccodicola A."/>
            <person name="Clark S.Y."/>
            <person name="Clarke G."/>
            <person name="Clee C.M."/>
            <person name="Clegg S."/>
            <person name="Clerc-Blankenburg K."/>
            <person name="Clifford K."/>
            <person name="Cobley V."/>
            <person name="Cole C.G."/>
            <person name="Conquer J.S."/>
            <person name="Corby N."/>
            <person name="Connor R.E."/>
            <person name="David R."/>
            <person name="Davies J."/>
            <person name="Davis C."/>
            <person name="Davis J."/>
            <person name="Delgado O."/>
            <person name="Deshazo D."/>
            <person name="Dhami P."/>
            <person name="Ding Y."/>
            <person name="Dinh H."/>
            <person name="Dodsworth S."/>
            <person name="Draper H."/>
            <person name="Dugan-Rocha S."/>
            <person name="Dunham A."/>
            <person name="Dunn M."/>
            <person name="Durbin K.J."/>
            <person name="Dutta I."/>
            <person name="Eades T."/>
            <person name="Ellwood M."/>
            <person name="Emery-Cohen A."/>
            <person name="Errington H."/>
            <person name="Evans K.L."/>
            <person name="Faulkner L."/>
            <person name="Francis F."/>
            <person name="Frankland J."/>
            <person name="Fraser A.E."/>
            <person name="Galgoczy P."/>
            <person name="Gilbert J."/>
            <person name="Gill R."/>
            <person name="Gloeckner G."/>
            <person name="Gregory S.G."/>
            <person name="Gribble S."/>
            <person name="Griffiths C."/>
            <person name="Grocock R."/>
            <person name="Gu Y."/>
            <person name="Gwilliam R."/>
            <person name="Hamilton C."/>
            <person name="Hart E.A."/>
            <person name="Hawes A."/>
            <person name="Heath P.D."/>
            <person name="Heitmann K."/>
            <person name="Hennig S."/>
            <person name="Hernandez J."/>
            <person name="Hinzmann B."/>
            <person name="Ho S."/>
            <person name="Hoffs M."/>
            <person name="Howden P.J."/>
            <person name="Huckle E.J."/>
            <person name="Hume J."/>
            <person name="Hunt P.J."/>
            <person name="Hunt A.R."/>
            <person name="Isherwood J."/>
            <person name="Jacob L."/>
            <person name="Johnson D."/>
            <person name="Jones S."/>
            <person name="de Jong P.J."/>
            <person name="Joseph S.S."/>
            <person name="Keenan S."/>
            <person name="Kelly S."/>
            <person name="Kershaw J.K."/>
            <person name="Khan Z."/>
            <person name="Kioschis P."/>
            <person name="Klages S."/>
            <person name="Knights A.J."/>
            <person name="Kosiura A."/>
            <person name="Kovar-Smith C."/>
            <person name="Laird G.K."/>
            <person name="Langford C."/>
            <person name="Lawlor S."/>
            <person name="Leversha M."/>
            <person name="Lewis L."/>
            <person name="Liu W."/>
            <person name="Lloyd C."/>
            <person name="Lloyd D.M."/>
            <person name="Loulseged H."/>
            <person name="Loveland J.E."/>
            <person name="Lovell J.D."/>
            <person name="Lozado R."/>
            <person name="Lu J."/>
            <person name="Lyne R."/>
            <person name="Ma J."/>
            <person name="Maheshwari M."/>
            <person name="Matthews L.H."/>
            <person name="McDowall J."/>
            <person name="McLaren S."/>
            <person name="McMurray A."/>
            <person name="Meidl P."/>
            <person name="Meitinger T."/>
            <person name="Milne S."/>
            <person name="Miner G."/>
            <person name="Mistry S.L."/>
            <person name="Morgan M."/>
            <person name="Morris S."/>
            <person name="Mueller I."/>
            <person name="Mullikin J.C."/>
            <person name="Nguyen N."/>
            <person name="Nordsiek G."/>
            <person name="Nyakatura G."/>
            <person name="O'dell C.N."/>
            <person name="Okwuonu G."/>
            <person name="Palmer S."/>
            <person name="Pandian R."/>
            <person name="Parker D."/>
            <person name="Parrish J."/>
            <person name="Pasternak S."/>
            <person name="Patel D."/>
            <person name="Pearce A.V."/>
            <person name="Pearson D.M."/>
            <person name="Pelan S.E."/>
            <person name="Perez L."/>
            <person name="Porter K.M."/>
            <person name="Ramsey Y."/>
            <person name="Reichwald K."/>
            <person name="Rhodes S."/>
            <person name="Ridler K.A."/>
            <person name="Schlessinger D."/>
            <person name="Schueler M.G."/>
            <person name="Sehra H.K."/>
            <person name="Shaw-Smith C."/>
            <person name="Shen H."/>
            <person name="Sheridan E.M."/>
            <person name="Shownkeen R."/>
            <person name="Skuce C.D."/>
            <person name="Smith M.L."/>
            <person name="Sotheran E.C."/>
            <person name="Steingruber H.E."/>
            <person name="Steward C.A."/>
            <person name="Storey R."/>
            <person name="Swann R.M."/>
            <person name="Swarbreck D."/>
            <person name="Tabor P.E."/>
            <person name="Taudien S."/>
            <person name="Taylor T."/>
            <person name="Teague B."/>
            <person name="Thomas K."/>
            <person name="Thorpe A."/>
            <person name="Timms K."/>
            <person name="Tracey A."/>
            <person name="Trevanion S."/>
            <person name="Tromans A.C."/>
            <person name="d'Urso M."/>
            <person name="Verduzco D."/>
            <person name="Villasana D."/>
            <person name="Waldron L."/>
            <person name="Wall M."/>
            <person name="Wang Q."/>
            <person name="Warren J."/>
            <person name="Warry G.L."/>
            <person name="Wei X."/>
            <person name="West A."/>
            <person name="Whitehead S.L."/>
            <person name="Whiteley M.N."/>
            <person name="Wilkinson J.E."/>
            <person name="Willey D.L."/>
            <person name="Williams G."/>
            <person name="Williams L."/>
            <person name="Williamson A."/>
            <person name="Williamson H."/>
            <person name="Wilming L."/>
            <person name="Woodmansey R.L."/>
            <person name="Wray P.W."/>
            <person name="Yen J."/>
            <person name="Zhang J."/>
            <person name="Zhou J."/>
            <person name="Zoghbi H."/>
            <person name="Zorilla S."/>
            <person name="Buck D."/>
            <person name="Reinhardt R."/>
            <person name="Poustka A."/>
            <person name="Rosenthal A."/>
            <person name="Lehrach H."/>
            <person name="Meindl A."/>
            <person name="Minx P.J."/>
            <person name="Hillier L.W."/>
            <person name="Willard H.F."/>
            <person name="Wilson R.K."/>
            <person name="Waterston R.H."/>
            <person name="Rice C.M."/>
            <person name="Vaudin M."/>
            <person name="Coulson A."/>
            <person name="Nelson D.L."/>
            <person name="Weinstock G."/>
            <person name="Sulston J.E."/>
            <person name="Durbin R.M."/>
            <person name="Hubbard T."/>
            <person name="Gibbs R.A."/>
            <person name="Beck S."/>
            <person name="Rogers J."/>
            <person name="Bentley D.R."/>
        </authorList>
    </citation>
    <scope>NUCLEOTIDE SEQUENCE [LARGE SCALE GENOMIC DNA]</scope>
</reference>
<reference key="3">
    <citation type="submission" date="2005-07" db="EMBL/GenBank/DDBJ databases">
        <authorList>
            <person name="Mural R.J."/>
            <person name="Istrail S."/>
            <person name="Sutton G.G."/>
            <person name="Florea L."/>
            <person name="Halpern A.L."/>
            <person name="Mobarry C.M."/>
            <person name="Lippert R."/>
            <person name="Walenz B."/>
            <person name="Shatkay H."/>
            <person name="Dew I."/>
            <person name="Miller J.R."/>
            <person name="Flanigan M.J."/>
            <person name="Edwards N.J."/>
            <person name="Bolanos R."/>
            <person name="Fasulo D."/>
            <person name="Halldorsson B.V."/>
            <person name="Hannenhalli S."/>
            <person name="Turner R."/>
            <person name="Yooseph S."/>
            <person name="Lu F."/>
            <person name="Nusskern D.R."/>
            <person name="Shue B.C."/>
            <person name="Zheng X.H."/>
            <person name="Zhong F."/>
            <person name="Delcher A.L."/>
            <person name="Huson D.H."/>
            <person name="Kravitz S.A."/>
            <person name="Mouchard L."/>
            <person name="Reinert K."/>
            <person name="Remington K.A."/>
            <person name="Clark A.G."/>
            <person name="Waterman M.S."/>
            <person name="Eichler E.E."/>
            <person name="Adams M.D."/>
            <person name="Hunkapiller M.W."/>
            <person name="Myers E.W."/>
            <person name="Venter J.C."/>
        </authorList>
    </citation>
    <scope>NUCLEOTIDE SEQUENCE [LARGE SCALE GENOMIC DNA]</scope>
</reference>
<reference key="4">
    <citation type="journal article" date="2004" name="Genome Res.">
        <title>The status, quality, and expansion of the NIH full-length cDNA project: the Mammalian Gene Collection (MGC).</title>
        <authorList>
            <consortium name="The MGC Project Team"/>
        </authorList>
    </citation>
    <scope>NUCLEOTIDE SEQUENCE [LARGE SCALE MRNA]</scope>
    <source>
        <tissue>Lung</tissue>
    </source>
</reference>
<reference key="5">
    <citation type="journal article" date="2019" name="Reproduction">
        <title>Effect of the Neuropeptide Phoenixin and Its Receptor GPR173 During Folliculogenesis.</title>
        <authorList>
            <person name="Nguyen X.P."/>
            <person name="Nakamura T."/>
            <person name="Osuka S."/>
            <person name="Bayasula B."/>
            <person name="Nakanishi N."/>
            <person name="Kasahara Y."/>
            <person name="Muraoka A."/>
            <person name="Hayashi S."/>
            <person name="Nagai T."/>
            <person name="Murase T."/>
            <person name="Goto M."/>
            <person name="Iwase A."/>
            <person name="Kikkawa F."/>
        </authorList>
    </citation>
    <scope>FUNCTION</scope>
    <scope>TISSUE SPECIFICITY</scope>
</reference>
<feature type="chain" id="PRO_0000069650" description="Probable G-protein coupled receptor 173">
    <location>
        <begin position="1"/>
        <end position="373"/>
    </location>
</feature>
<feature type="topological domain" description="Extracellular" evidence="2">
    <location>
        <begin position="1"/>
        <end position="26"/>
    </location>
</feature>
<feature type="transmembrane region" description="Helical; Name=1" evidence="2">
    <location>
        <begin position="27"/>
        <end position="47"/>
    </location>
</feature>
<feature type="topological domain" description="Cytoplasmic" evidence="2">
    <location>
        <begin position="48"/>
        <end position="59"/>
    </location>
</feature>
<feature type="transmembrane region" description="Helical; Name=2" evidence="2">
    <location>
        <begin position="60"/>
        <end position="80"/>
    </location>
</feature>
<feature type="topological domain" description="Extracellular" evidence="2">
    <location>
        <begin position="81"/>
        <end position="97"/>
    </location>
</feature>
<feature type="transmembrane region" description="Helical; Name=3" evidence="2">
    <location>
        <begin position="98"/>
        <end position="118"/>
    </location>
</feature>
<feature type="topological domain" description="Cytoplasmic" evidence="2">
    <location>
        <begin position="119"/>
        <end position="139"/>
    </location>
</feature>
<feature type="transmembrane region" description="Helical; Name=4" evidence="2">
    <location>
        <begin position="140"/>
        <end position="160"/>
    </location>
</feature>
<feature type="topological domain" description="Extracellular" evidence="2">
    <location>
        <begin position="161"/>
        <end position="188"/>
    </location>
</feature>
<feature type="transmembrane region" description="Helical; Name=5" evidence="2">
    <location>
        <begin position="189"/>
        <end position="209"/>
    </location>
</feature>
<feature type="topological domain" description="Cytoplasmic" evidence="2">
    <location>
        <begin position="210"/>
        <end position="287"/>
    </location>
</feature>
<feature type="transmembrane region" description="Helical; Name=6" evidence="2">
    <location>
        <begin position="288"/>
        <end position="308"/>
    </location>
</feature>
<feature type="topological domain" description="Extracellular" evidence="2">
    <location>
        <begin position="309"/>
        <end position="322"/>
    </location>
</feature>
<feature type="transmembrane region" description="Helical; Name=7" evidence="2">
    <location>
        <begin position="323"/>
        <end position="343"/>
    </location>
</feature>
<feature type="topological domain" description="Cytoplasmic" evidence="2">
    <location>
        <begin position="344"/>
        <end position="373"/>
    </location>
</feature>
<feature type="glycosylation site" description="N-linked (GlcNAc...) asparagine" evidence="2">
    <location>
        <position position="3"/>
    </location>
</feature>
<feature type="glycosylation site" description="N-linked (GlcNAc...) asparagine" evidence="2">
    <location>
        <position position="184"/>
    </location>
</feature>
<feature type="disulfide bond" evidence="3">
    <location>
        <begin position="96"/>
        <end position="174"/>
    </location>
</feature>
<sequence length="373" mass="41481">MANTTGEPEEVSGALSPPSASAYVKLVLLGLIMCVSLAGNAILSLLVLKERALHKAPYYFLLDLCLADGIRSAVCFPFVLASVRHGSSWTFSALSCKIVAFMAVLFCFHAAFMLFCISVTRYMAIAHHRFYAKRMTLWTCAAVICMAWTLSVAMAFPPVFDVGTYKFIREEDQCIFEHRYFKANDTLGFMLMLAVLMAATHAVYGKLLLFEYRHRKMKPVQMVPAISQNWTFHGPGATGQAAANWIAGFGRGPMPPTLLGIRQNGHAASRRLLGMDEVKGEKQLGRMFYAITLLFLLLWSPYIVACYWRVFVKACAVPHRYLATAVWMSFAQAAVNPIVCFLLNKDLKKCLRTHAPCWGTGGAPAPREPYCVM</sequence>
<protein>
    <recommendedName>
        <fullName>Probable G-protein coupled receptor 173</fullName>
    </recommendedName>
    <alternativeName>
        <fullName>Super conserved receptor expressed in brain 3</fullName>
    </alternativeName>
</protein>
<organism>
    <name type="scientific">Homo sapiens</name>
    <name type="common">Human</name>
    <dbReference type="NCBI Taxonomy" id="9606"/>
    <lineage>
        <taxon>Eukaryota</taxon>
        <taxon>Metazoa</taxon>
        <taxon>Chordata</taxon>
        <taxon>Craniata</taxon>
        <taxon>Vertebrata</taxon>
        <taxon>Euteleostomi</taxon>
        <taxon>Mammalia</taxon>
        <taxon>Eutheria</taxon>
        <taxon>Euarchontoglires</taxon>
        <taxon>Primates</taxon>
        <taxon>Haplorrhini</taxon>
        <taxon>Catarrhini</taxon>
        <taxon>Hominidae</taxon>
        <taxon>Homo</taxon>
    </lineage>
</organism>